<feature type="chain" id="PRO_0000320717" description="Protein translocase subunit SecA">
    <location>
        <begin position="1"/>
        <end position="902"/>
    </location>
</feature>
<feature type="binding site" evidence="1">
    <location>
        <position position="89"/>
    </location>
    <ligand>
        <name>ATP</name>
        <dbReference type="ChEBI" id="CHEBI:30616"/>
    </ligand>
</feature>
<feature type="binding site" evidence="1">
    <location>
        <begin position="107"/>
        <end position="111"/>
    </location>
    <ligand>
        <name>ATP</name>
        <dbReference type="ChEBI" id="CHEBI:30616"/>
    </ligand>
</feature>
<feature type="binding site" evidence="1">
    <location>
        <position position="502"/>
    </location>
    <ligand>
        <name>ATP</name>
        <dbReference type="ChEBI" id="CHEBI:30616"/>
    </ligand>
</feature>
<feature type="binding site" evidence="1">
    <location>
        <position position="884"/>
    </location>
    <ligand>
        <name>Zn(2+)</name>
        <dbReference type="ChEBI" id="CHEBI:29105"/>
    </ligand>
</feature>
<feature type="binding site" evidence="1">
    <location>
        <position position="886"/>
    </location>
    <ligand>
        <name>Zn(2+)</name>
        <dbReference type="ChEBI" id="CHEBI:29105"/>
    </ligand>
</feature>
<feature type="binding site" evidence="1">
    <location>
        <position position="895"/>
    </location>
    <ligand>
        <name>Zn(2+)</name>
        <dbReference type="ChEBI" id="CHEBI:29105"/>
    </ligand>
</feature>
<feature type="binding site" evidence="1">
    <location>
        <position position="896"/>
    </location>
    <ligand>
        <name>Zn(2+)</name>
        <dbReference type="ChEBI" id="CHEBI:29105"/>
    </ligand>
</feature>
<organism>
    <name type="scientific">Agrobacterium fabrum (strain C58 / ATCC 33970)</name>
    <name type="common">Agrobacterium tumefaciens (strain C58)</name>
    <dbReference type="NCBI Taxonomy" id="176299"/>
    <lineage>
        <taxon>Bacteria</taxon>
        <taxon>Pseudomonadati</taxon>
        <taxon>Pseudomonadota</taxon>
        <taxon>Alphaproteobacteria</taxon>
        <taxon>Hyphomicrobiales</taxon>
        <taxon>Rhizobiaceae</taxon>
        <taxon>Rhizobium/Agrobacterium group</taxon>
        <taxon>Agrobacterium</taxon>
        <taxon>Agrobacterium tumefaciens complex</taxon>
    </lineage>
</organism>
<gene>
    <name evidence="1" type="primary">secA</name>
    <name type="ordered locus">Atu3520</name>
    <name type="ORF">AGR_L_2621</name>
</gene>
<evidence type="ECO:0000255" key="1">
    <source>
        <dbReference type="HAMAP-Rule" id="MF_01382"/>
    </source>
</evidence>
<name>SECA_AGRFC</name>
<reference key="1">
    <citation type="journal article" date="2001" name="Science">
        <title>The genome of the natural genetic engineer Agrobacterium tumefaciens C58.</title>
        <authorList>
            <person name="Wood D.W."/>
            <person name="Setubal J.C."/>
            <person name="Kaul R."/>
            <person name="Monks D.E."/>
            <person name="Kitajima J.P."/>
            <person name="Okura V.K."/>
            <person name="Zhou Y."/>
            <person name="Chen L."/>
            <person name="Wood G.E."/>
            <person name="Almeida N.F. Jr."/>
            <person name="Woo L."/>
            <person name="Chen Y."/>
            <person name="Paulsen I.T."/>
            <person name="Eisen J.A."/>
            <person name="Karp P.D."/>
            <person name="Bovee D. Sr."/>
            <person name="Chapman P."/>
            <person name="Clendenning J."/>
            <person name="Deatherage G."/>
            <person name="Gillet W."/>
            <person name="Grant C."/>
            <person name="Kutyavin T."/>
            <person name="Levy R."/>
            <person name="Li M.-J."/>
            <person name="McClelland E."/>
            <person name="Palmieri A."/>
            <person name="Raymond C."/>
            <person name="Rouse G."/>
            <person name="Saenphimmachak C."/>
            <person name="Wu Z."/>
            <person name="Romero P."/>
            <person name="Gordon D."/>
            <person name="Zhang S."/>
            <person name="Yoo H."/>
            <person name="Tao Y."/>
            <person name="Biddle P."/>
            <person name="Jung M."/>
            <person name="Krespan W."/>
            <person name="Perry M."/>
            <person name="Gordon-Kamm B."/>
            <person name="Liao L."/>
            <person name="Kim S."/>
            <person name="Hendrick C."/>
            <person name="Zhao Z.-Y."/>
            <person name="Dolan M."/>
            <person name="Chumley F."/>
            <person name="Tingey S.V."/>
            <person name="Tomb J.-F."/>
            <person name="Gordon M.P."/>
            <person name="Olson M.V."/>
            <person name="Nester E.W."/>
        </authorList>
    </citation>
    <scope>NUCLEOTIDE SEQUENCE [LARGE SCALE GENOMIC DNA]</scope>
    <source>
        <strain>C58 / ATCC 33970</strain>
    </source>
</reference>
<reference key="2">
    <citation type="journal article" date="2001" name="Science">
        <title>Genome sequence of the plant pathogen and biotechnology agent Agrobacterium tumefaciens C58.</title>
        <authorList>
            <person name="Goodner B."/>
            <person name="Hinkle G."/>
            <person name="Gattung S."/>
            <person name="Miller N."/>
            <person name="Blanchard M."/>
            <person name="Qurollo B."/>
            <person name="Goldman B.S."/>
            <person name="Cao Y."/>
            <person name="Askenazi M."/>
            <person name="Halling C."/>
            <person name="Mullin L."/>
            <person name="Houmiel K."/>
            <person name="Gordon J."/>
            <person name="Vaudin M."/>
            <person name="Iartchouk O."/>
            <person name="Epp A."/>
            <person name="Liu F."/>
            <person name="Wollam C."/>
            <person name="Allinger M."/>
            <person name="Doughty D."/>
            <person name="Scott C."/>
            <person name="Lappas C."/>
            <person name="Markelz B."/>
            <person name="Flanagan C."/>
            <person name="Crowell C."/>
            <person name="Gurson J."/>
            <person name="Lomo C."/>
            <person name="Sear C."/>
            <person name="Strub G."/>
            <person name="Cielo C."/>
            <person name="Slater S."/>
        </authorList>
    </citation>
    <scope>NUCLEOTIDE SEQUENCE [LARGE SCALE GENOMIC DNA]</scope>
    <source>
        <strain>C58 / ATCC 33970</strain>
    </source>
</reference>
<sequence length="902" mass="101248">MVSLGGIARKLFGSANERRVRSYKSKIAAINALEEATKALSDEALAAKTAEFRQQLADGKTLDDLLIPAFAVAREASRRVLHMRPFDVQLTGAMILHGGAIAEMKTGEGKTLVATLAVYLNALAGKGVHVVTVNDYLAKRDAATMSKLYGFLGLTTGVIVHGLDDDQRREAYACDITYATNNELGFDYLRDNMKYDRAQMVQRGHNYAIVDEVDSILVDEARTPLIISGPLDDRSDLYNTIDAFIPLLSPEDYEIDEKQRSANFSEDGTEKLENLLRQAGLLKGESLYDIENVAIVHHINNALKAHKLFTRDKDYIVRNDEIVIIDEFTGRMMPGRRYSEGQHQALEAKEKVQIQPENQTLSSVTFQNYFRMYEKLAGMTGTASTEAEEFGNIYGLDVIEVPTNLPIQRIDEDDEVYRTGEEKFLAIITEIKAAHERGQPVLVGTTSIEKSELLAHMLRQSGFTDFQVLNARYHEQEAYIVSQAGVPGAVTIATNMAGRGTDIQLGGNVDMRLERELEGMEPGPELDAKEAAIRAEIKVLKEKALAAGGLYVIATERHESRRIDNQLRGRSGRQGDPGRSKFYLSLQDDLMRIFGSERMDSMLQKLGLKDGEAIVHPWINKALERAQKKVEARNFETRKNLLKYDDVLNDQRKVIFDQRLELMEADNIGETAADMRHEVIEALVTKHIPENAYAEQWDIAGLKAGIAQFLNLDLPVEEWAKEEGIAEDDILQRVTEAADTYAAERAERFGPEIMTYVERSVILQTIDHLWREHIVNLDHLRSVVGFRGYAQRDPLQEYKAEAFELFQSLLTNLREAVTAQLMRVELVQQEPQQPELPEMTAHHLDPVTGEDEMAQGVPAAFVPAEERDPNNPATWGRIGRNEMCPCGSGKKYKHCHGVYEQA</sequence>
<proteinExistence type="inferred from homology"/>
<comment type="function">
    <text evidence="1">Part of the Sec protein translocase complex. Interacts with the SecYEG preprotein conducting channel. Has a central role in coupling the hydrolysis of ATP to the transfer of proteins into and across the cell membrane, serving both as a receptor for the preprotein-SecB complex and as an ATP-driven molecular motor driving the stepwise translocation of polypeptide chains across the membrane.</text>
</comment>
<comment type="catalytic activity">
    <reaction evidence="1">
        <text>ATP + H2O + cellular proteinSide 1 = ADP + phosphate + cellular proteinSide 2.</text>
        <dbReference type="EC" id="7.4.2.8"/>
    </reaction>
</comment>
<comment type="cofactor">
    <cofactor evidence="1">
        <name>Zn(2+)</name>
        <dbReference type="ChEBI" id="CHEBI:29105"/>
    </cofactor>
    <text evidence="1">May bind 1 zinc ion per subunit.</text>
</comment>
<comment type="subunit">
    <text evidence="1">Monomer and homodimer. Part of the essential Sec protein translocation apparatus which comprises SecA, SecYEG and auxiliary proteins SecDF-YajC and YidC.</text>
</comment>
<comment type="subcellular location">
    <subcellularLocation>
        <location evidence="1">Cell inner membrane</location>
        <topology evidence="1">Peripheral membrane protein</topology>
        <orientation evidence="1">Cytoplasmic side</orientation>
    </subcellularLocation>
    <subcellularLocation>
        <location evidence="1">Cytoplasm</location>
    </subcellularLocation>
    <text evidence="1">Distribution is 50-50.</text>
</comment>
<comment type="similarity">
    <text evidence="1">Belongs to the SecA family.</text>
</comment>
<dbReference type="EC" id="7.4.2.8" evidence="1"/>
<dbReference type="EMBL" id="AE007870">
    <property type="protein sequence ID" value="AAK89876.2"/>
    <property type="molecule type" value="Genomic_DNA"/>
</dbReference>
<dbReference type="RefSeq" id="NP_357091.2">
    <property type="nucleotide sequence ID" value="NC_003063.2"/>
</dbReference>
<dbReference type="RefSeq" id="WP_010973108.1">
    <property type="nucleotide sequence ID" value="NC_003063.2"/>
</dbReference>
<dbReference type="SMR" id="Q7CSN9"/>
<dbReference type="STRING" id="176299.Atu3520"/>
<dbReference type="EnsemblBacteria" id="AAK89876">
    <property type="protein sequence ID" value="AAK89876"/>
    <property type="gene ID" value="Atu3520"/>
</dbReference>
<dbReference type="GeneID" id="1135394"/>
<dbReference type="KEGG" id="atu:Atu3520"/>
<dbReference type="PATRIC" id="fig|176299.10.peg.3361"/>
<dbReference type="eggNOG" id="COG0653">
    <property type="taxonomic scope" value="Bacteria"/>
</dbReference>
<dbReference type="HOGENOM" id="CLU_005314_3_0_5"/>
<dbReference type="OrthoDB" id="9805579at2"/>
<dbReference type="PhylomeDB" id="Q7CSN9"/>
<dbReference type="BioCyc" id="AGRO:ATU3520-MONOMER"/>
<dbReference type="Proteomes" id="UP000000813">
    <property type="component" value="Chromosome linear"/>
</dbReference>
<dbReference type="GO" id="GO:0031522">
    <property type="term" value="C:cell envelope Sec protein transport complex"/>
    <property type="evidence" value="ECO:0007669"/>
    <property type="project" value="TreeGrafter"/>
</dbReference>
<dbReference type="GO" id="GO:0005829">
    <property type="term" value="C:cytosol"/>
    <property type="evidence" value="ECO:0007669"/>
    <property type="project" value="TreeGrafter"/>
</dbReference>
<dbReference type="GO" id="GO:0005886">
    <property type="term" value="C:plasma membrane"/>
    <property type="evidence" value="ECO:0007669"/>
    <property type="project" value="UniProtKB-SubCell"/>
</dbReference>
<dbReference type="GO" id="GO:0015627">
    <property type="term" value="C:type II protein secretion system complex"/>
    <property type="evidence" value="ECO:0000250"/>
    <property type="project" value="PAMGO_GAT"/>
</dbReference>
<dbReference type="GO" id="GO:0005524">
    <property type="term" value="F:ATP binding"/>
    <property type="evidence" value="ECO:0007669"/>
    <property type="project" value="UniProtKB-UniRule"/>
</dbReference>
<dbReference type="GO" id="GO:0046872">
    <property type="term" value="F:metal ion binding"/>
    <property type="evidence" value="ECO:0007669"/>
    <property type="project" value="UniProtKB-KW"/>
</dbReference>
<dbReference type="GO" id="GO:0008564">
    <property type="term" value="F:protein-exporting ATPase activity"/>
    <property type="evidence" value="ECO:0007669"/>
    <property type="project" value="UniProtKB-EC"/>
</dbReference>
<dbReference type="GO" id="GO:0065002">
    <property type="term" value="P:intracellular protein transmembrane transport"/>
    <property type="evidence" value="ECO:0007669"/>
    <property type="project" value="UniProtKB-UniRule"/>
</dbReference>
<dbReference type="GO" id="GO:0017038">
    <property type="term" value="P:protein import"/>
    <property type="evidence" value="ECO:0007669"/>
    <property type="project" value="InterPro"/>
</dbReference>
<dbReference type="GO" id="GO:0015628">
    <property type="term" value="P:protein secretion by the type II secretion system"/>
    <property type="evidence" value="ECO:0000250"/>
    <property type="project" value="PAMGO_GAT"/>
</dbReference>
<dbReference type="GO" id="GO:0006605">
    <property type="term" value="P:protein targeting"/>
    <property type="evidence" value="ECO:0007669"/>
    <property type="project" value="UniProtKB-UniRule"/>
</dbReference>
<dbReference type="GO" id="GO:0043952">
    <property type="term" value="P:protein transport by the Sec complex"/>
    <property type="evidence" value="ECO:0007669"/>
    <property type="project" value="TreeGrafter"/>
</dbReference>
<dbReference type="CDD" id="cd17928">
    <property type="entry name" value="DEXDc_SecA"/>
    <property type="match status" value="1"/>
</dbReference>
<dbReference type="CDD" id="cd18803">
    <property type="entry name" value="SF2_C_secA"/>
    <property type="match status" value="1"/>
</dbReference>
<dbReference type="FunFam" id="3.90.1440.10:FF:000001">
    <property type="entry name" value="Preprotein translocase subunit SecA"/>
    <property type="match status" value="1"/>
</dbReference>
<dbReference type="FunFam" id="1.10.3060.10:FF:000003">
    <property type="entry name" value="Protein translocase subunit SecA"/>
    <property type="match status" value="1"/>
</dbReference>
<dbReference type="FunFam" id="3.40.50.300:FF:001790">
    <property type="entry name" value="Protein translocase subunit SecA"/>
    <property type="match status" value="1"/>
</dbReference>
<dbReference type="Gene3D" id="1.10.3060.10">
    <property type="entry name" value="Helical scaffold and wing domains of SecA"/>
    <property type="match status" value="1"/>
</dbReference>
<dbReference type="Gene3D" id="3.40.50.300">
    <property type="entry name" value="P-loop containing nucleotide triphosphate hydrolases"/>
    <property type="match status" value="2"/>
</dbReference>
<dbReference type="Gene3D" id="3.90.1440.10">
    <property type="entry name" value="SecA, preprotein cross-linking domain"/>
    <property type="match status" value="1"/>
</dbReference>
<dbReference type="HAMAP" id="MF_01382">
    <property type="entry name" value="SecA"/>
    <property type="match status" value="1"/>
</dbReference>
<dbReference type="InterPro" id="IPR014001">
    <property type="entry name" value="Helicase_ATP-bd"/>
</dbReference>
<dbReference type="InterPro" id="IPR001650">
    <property type="entry name" value="Helicase_C-like"/>
</dbReference>
<dbReference type="InterPro" id="IPR027417">
    <property type="entry name" value="P-loop_NTPase"/>
</dbReference>
<dbReference type="InterPro" id="IPR004027">
    <property type="entry name" value="SEC_C_motif"/>
</dbReference>
<dbReference type="InterPro" id="IPR000185">
    <property type="entry name" value="SecA"/>
</dbReference>
<dbReference type="InterPro" id="IPR020937">
    <property type="entry name" value="SecA_CS"/>
</dbReference>
<dbReference type="InterPro" id="IPR011115">
    <property type="entry name" value="SecA_DEAD"/>
</dbReference>
<dbReference type="InterPro" id="IPR014018">
    <property type="entry name" value="SecA_motor_DEAD"/>
</dbReference>
<dbReference type="InterPro" id="IPR011130">
    <property type="entry name" value="SecA_preprotein_X-link_dom"/>
</dbReference>
<dbReference type="InterPro" id="IPR044722">
    <property type="entry name" value="SecA_SF2_C"/>
</dbReference>
<dbReference type="InterPro" id="IPR011116">
    <property type="entry name" value="SecA_Wing/Scaffold"/>
</dbReference>
<dbReference type="InterPro" id="IPR036266">
    <property type="entry name" value="SecA_Wing/Scaffold_sf"/>
</dbReference>
<dbReference type="InterPro" id="IPR036670">
    <property type="entry name" value="SecA_X-link_sf"/>
</dbReference>
<dbReference type="NCBIfam" id="NF009538">
    <property type="entry name" value="PRK12904.1"/>
    <property type="match status" value="1"/>
</dbReference>
<dbReference type="NCBIfam" id="TIGR00963">
    <property type="entry name" value="secA"/>
    <property type="match status" value="1"/>
</dbReference>
<dbReference type="PANTHER" id="PTHR30612:SF0">
    <property type="entry name" value="CHLOROPLAST PROTEIN-TRANSPORTING ATPASE"/>
    <property type="match status" value="1"/>
</dbReference>
<dbReference type="PANTHER" id="PTHR30612">
    <property type="entry name" value="SECA INNER MEMBRANE COMPONENT OF SEC PROTEIN SECRETION SYSTEM"/>
    <property type="match status" value="1"/>
</dbReference>
<dbReference type="Pfam" id="PF21090">
    <property type="entry name" value="P-loop_SecA"/>
    <property type="match status" value="1"/>
</dbReference>
<dbReference type="Pfam" id="PF02810">
    <property type="entry name" value="SEC-C"/>
    <property type="match status" value="1"/>
</dbReference>
<dbReference type="Pfam" id="PF07517">
    <property type="entry name" value="SecA_DEAD"/>
    <property type="match status" value="1"/>
</dbReference>
<dbReference type="Pfam" id="PF01043">
    <property type="entry name" value="SecA_PP_bind"/>
    <property type="match status" value="1"/>
</dbReference>
<dbReference type="Pfam" id="PF07516">
    <property type="entry name" value="SecA_SW"/>
    <property type="match status" value="1"/>
</dbReference>
<dbReference type="PRINTS" id="PR00906">
    <property type="entry name" value="SECA"/>
</dbReference>
<dbReference type="SMART" id="SM00957">
    <property type="entry name" value="SecA_DEAD"/>
    <property type="match status" value="1"/>
</dbReference>
<dbReference type="SMART" id="SM00958">
    <property type="entry name" value="SecA_PP_bind"/>
    <property type="match status" value="1"/>
</dbReference>
<dbReference type="SUPFAM" id="SSF81886">
    <property type="entry name" value="Helical scaffold and wing domains of SecA"/>
    <property type="match status" value="1"/>
</dbReference>
<dbReference type="SUPFAM" id="SSF52540">
    <property type="entry name" value="P-loop containing nucleoside triphosphate hydrolases"/>
    <property type="match status" value="2"/>
</dbReference>
<dbReference type="SUPFAM" id="SSF81767">
    <property type="entry name" value="Pre-protein crosslinking domain of SecA"/>
    <property type="match status" value="1"/>
</dbReference>
<dbReference type="PROSITE" id="PS01312">
    <property type="entry name" value="SECA"/>
    <property type="match status" value="1"/>
</dbReference>
<dbReference type="PROSITE" id="PS51196">
    <property type="entry name" value="SECA_MOTOR_DEAD"/>
    <property type="match status" value="1"/>
</dbReference>
<protein>
    <recommendedName>
        <fullName evidence="1">Protein translocase subunit SecA</fullName>
        <ecNumber evidence="1">7.4.2.8</ecNumber>
    </recommendedName>
</protein>
<accession>Q7CSN9</accession>
<keyword id="KW-0067">ATP-binding</keyword>
<keyword id="KW-0997">Cell inner membrane</keyword>
<keyword id="KW-1003">Cell membrane</keyword>
<keyword id="KW-0963">Cytoplasm</keyword>
<keyword id="KW-0472">Membrane</keyword>
<keyword id="KW-0479">Metal-binding</keyword>
<keyword id="KW-0547">Nucleotide-binding</keyword>
<keyword id="KW-0653">Protein transport</keyword>
<keyword id="KW-1185">Reference proteome</keyword>
<keyword id="KW-1278">Translocase</keyword>
<keyword id="KW-0811">Translocation</keyword>
<keyword id="KW-0813">Transport</keyword>
<keyword id="KW-0862">Zinc</keyword>